<feature type="chain" id="PRO_1000197981" description="Queuine tRNA-ribosyltransferase">
    <location>
        <begin position="1"/>
        <end position="379"/>
    </location>
</feature>
<feature type="region of interest" description="RNA binding" evidence="1">
    <location>
        <begin position="249"/>
        <end position="255"/>
    </location>
</feature>
<feature type="region of interest" description="RNA binding; important for wobble base 34 recognition" evidence="1">
    <location>
        <begin position="273"/>
        <end position="277"/>
    </location>
</feature>
<feature type="active site" description="Proton acceptor" evidence="1">
    <location>
        <position position="94"/>
    </location>
</feature>
<feature type="active site" description="Nucleophile" evidence="1">
    <location>
        <position position="268"/>
    </location>
</feature>
<feature type="binding site" evidence="1">
    <location>
        <begin position="94"/>
        <end position="98"/>
    </location>
    <ligand>
        <name>substrate</name>
    </ligand>
</feature>
<feature type="binding site" evidence="1">
    <location>
        <position position="148"/>
    </location>
    <ligand>
        <name>substrate</name>
    </ligand>
</feature>
<feature type="binding site" evidence="1">
    <location>
        <position position="191"/>
    </location>
    <ligand>
        <name>substrate</name>
    </ligand>
</feature>
<feature type="binding site" evidence="1">
    <location>
        <position position="218"/>
    </location>
    <ligand>
        <name>substrate</name>
    </ligand>
</feature>
<feature type="binding site" evidence="1">
    <location>
        <position position="306"/>
    </location>
    <ligand>
        <name>Zn(2+)</name>
        <dbReference type="ChEBI" id="CHEBI:29105"/>
    </ligand>
</feature>
<feature type="binding site" evidence="1">
    <location>
        <position position="308"/>
    </location>
    <ligand>
        <name>Zn(2+)</name>
        <dbReference type="ChEBI" id="CHEBI:29105"/>
    </ligand>
</feature>
<feature type="binding site" evidence="1">
    <location>
        <position position="311"/>
    </location>
    <ligand>
        <name>Zn(2+)</name>
        <dbReference type="ChEBI" id="CHEBI:29105"/>
    </ligand>
</feature>
<feature type="binding site" evidence="1">
    <location>
        <position position="337"/>
    </location>
    <ligand>
        <name>Zn(2+)</name>
        <dbReference type="ChEBI" id="CHEBI:29105"/>
    </ligand>
</feature>
<gene>
    <name evidence="1" type="primary">tgt</name>
    <name type="ordered locus">BCAH820_4497</name>
</gene>
<accession>B7JQ03</accession>
<sequence>MTAIRYEFIKTCKQTGARLGRVHTPHGSFDTPTFMPVGTLATVKTMSPEELKAMDSGIILSNTYHLWLRPGHEIIREAGGLHKFMNWDRAILTDSGGFQVFSLSDFRRIEEEGVHFRNHLNGDKLFLSPEKAMEIQNALGSDIMMAFDECPPFPATFEYMKKSVERTSRWAERCLKAHERPQDQGLFGIVQGGEFEELRRQSAKDLVSMDFPGYAVGGLSVGEPKDIMNRVLEFTTPLLPDNKPRYLMGVGSPDSLIDGAIRGIDMFDCVLPTRIARNGTCMTSEGRLVVKNAKFARDFGPLDPNCDCYTCKNYSRAYIRHLMKCDETFGIRLTSYHNLHFLLNLMEQVRQAIREDRLGDFREEFFEQYGFNKPNAKNF</sequence>
<proteinExistence type="inferred from homology"/>
<organism>
    <name type="scientific">Bacillus cereus (strain AH820)</name>
    <dbReference type="NCBI Taxonomy" id="405535"/>
    <lineage>
        <taxon>Bacteria</taxon>
        <taxon>Bacillati</taxon>
        <taxon>Bacillota</taxon>
        <taxon>Bacilli</taxon>
        <taxon>Bacillales</taxon>
        <taxon>Bacillaceae</taxon>
        <taxon>Bacillus</taxon>
        <taxon>Bacillus cereus group</taxon>
    </lineage>
</organism>
<reference key="1">
    <citation type="submission" date="2008-10" db="EMBL/GenBank/DDBJ databases">
        <title>Genome sequence of Bacillus cereus AH820.</title>
        <authorList>
            <person name="Dodson R.J."/>
            <person name="Durkin A.S."/>
            <person name="Rosovitz M.J."/>
            <person name="Rasko D.A."/>
            <person name="Hoffmaster A."/>
            <person name="Ravel J."/>
            <person name="Sutton G."/>
        </authorList>
    </citation>
    <scope>NUCLEOTIDE SEQUENCE [LARGE SCALE GENOMIC DNA]</scope>
    <source>
        <strain>AH820</strain>
    </source>
</reference>
<evidence type="ECO:0000255" key="1">
    <source>
        <dbReference type="HAMAP-Rule" id="MF_00168"/>
    </source>
</evidence>
<comment type="function">
    <text evidence="1">Catalyzes the base-exchange of a guanine (G) residue with the queuine precursor 7-aminomethyl-7-deazaguanine (PreQ1) at position 34 (anticodon wobble position) in tRNAs with GU(N) anticodons (tRNA-Asp, -Asn, -His and -Tyr). Catalysis occurs through a double-displacement mechanism. The nucleophile active site attacks the C1' of nucleotide 34 to detach the guanine base from the RNA, forming a covalent enzyme-RNA intermediate. The proton acceptor active site deprotonates the incoming PreQ1, allowing a nucleophilic attack on the C1' of the ribose to form the product. After dissociation, two additional enzymatic reactions on the tRNA convert PreQ1 to queuine (Q), resulting in the hypermodified nucleoside queuosine (7-(((4,5-cis-dihydroxy-2-cyclopenten-1-yl)amino)methyl)-7-deazaguanosine).</text>
</comment>
<comment type="catalytic activity">
    <reaction evidence="1">
        <text>7-aminomethyl-7-carbaguanine + guanosine(34) in tRNA = 7-aminomethyl-7-carbaguanosine(34) in tRNA + guanine</text>
        <dbReference type="Rhea" id="RHEA:24104"/>
        <dbReference type="Rhea" id="RHEA-COMP:10341"/>
        <dbReference type="Rhea" id="RHEA-COMP:10342"/>
        <dbReference type="ChEBI" id="CHEBI:16235"/>
        <dbReference type="ChEBI" id="CHEBI:58703"/>
        <dbReference type="ChEBI" id="CHEBI:74269"/>
        <dbReference type="ChEBI" id="CHEBI:82833"/>
        <dbReference type="EC" id="2.4.2.29"/>
    </reaction>
</comment>
<comment type="cofactor">
    <cofactor evidence="1">
        <name>Zn(2+)</name>
        <dbReference type="ChEBI" id="CHEBI:29105"/>
    </cofactor>
    <text evidence="1">Binds 1 zinc ion per subunit.</text>
</comment>
<comment type="pathway">
    <text evidence="1">tRNA modification; tRNA-queuosine biosynthesis.</text>
</comment>
<comment type="subunit">
    <text evidence="1">Homodimer. Within each dimer, one monomer is responsible for RNA recognition and catalysis, while the other monomer binds to the replacement base PreQ1.</text>
</comment>
<comment type="similarity">
    <text evidence="1">Belongs to the queuine tRNA-ribosyltransferase family.</text>
</comment>
<keyword id="KW-0328">Glycosyltransferase</keyword>
<keyword id="KW-0479">Metal-binding</keyword>
<keyword id="KW-0671">Queuosine biosynthesis</keyword>
<keyword id="KW-0808">Transferase</keyword>
<keyword id="KW-0819">tRNA processing</keyword>
<keyword id="KW-0862">Zinc</keyword>
<dbReference type="EC" id="2.4.2.29" evidence="1"/>
<dbReference type="EMBL" id="CP001283">
    <property type="protein sequence ID" value="ACK91520.1"/>
    <property type="molecule type" value="Genomic_DNA"/>
</dbReference>
<dbReference type="RefSeq" id="WP_000125362.1">
    <property type="nucleotide sequence ID" value="NC_011773.1"/>
</dbReference>
<dbReference type="SMR" id="B7JQ03"/>
<dbReference type="GeneID" id="92798989"/>
<dbReference type="KEGG" id="bcu:BCAH820_4497"/>
<dbReference type="HOGENOM" id="CLU_022060_0_1_9"/>
<dbReference type="UniPathway" id="UPA00392"/>
<dbReference type="Proteomes" id="UP000001363">
    <property type="component" value="Chromosome"/>
</dbReference>
<dbReference type="GO" id="GO:0005829">
    <property type="term" value="C:cytosol"/>
    <property type="evidence" value="ECO:0007669"/>
    <property type="project" value="TreeGrafter"/>
</dbReference>
<dbReference type="GO" id="GO:0046872">
    <property type="term" value="F:metal ion binding"/>
    <property type="evidence" value="ECO:0007669"/>
    <property type="project" value="UniProtKB-KW"/>
</dbReference>
<dbReference type="GO" id="GO:0008479">
    <property type="term" value="F:tRNA-guanosine(34) queuine transglycosylase activity"/>
    <property type="evidence" value="ECO:0007669"/>
    <property type="project" value="UniProtKB-UniRule"/>
</dbReference>
<dbReference type="GO" id="GO:0008616">
    <property type="term" value="P:queuosine biosynthetic process"/>
    <property type="evidence" value="ECO:0007669"/>
    <property type="project" value="UniProtKB-UniRule"/>
</dbReference>
<dbReference type="GO" id="GO:0002099">
    <property type="term" value="P:tRNA wobble guanine modification"/>
    <property type="evidence" value="ECO:0007669"/>
    <property type="project" value="TreeGrafter"/>
</dbReference>
<dbReference type="GO" id="GO:0101030">
    <property type="term" value="P:tRNA-guanine transglycosylation"/>
    <property type="evidence" value="ECO:0007669"/>
    <property type="project" value="InterPro"/>
</dbReference>
<dbReference type="FunFam" id="3.20.20.105:FF:000001">
    <property type="entry name" value="Queuine tRNA-ribosyltransferase"/>
    <property type="match status" value="1"/>
</dbReference>
<dbReference type="Gene3D" id="3.20.20.105">
    <property type="entry name" value="Queuine tRNA-ribosyltransferase-like"/>
    <property type="match status" value="1"/>
</dbReference>
<dbReference type="HAMAP" id="MF_00168">
    <property type="entry name" value="Q_tRNA_Tgt"/>
    <property type="match status" value="1"/>
</dbReference>
<dbReference type="InterPro" id="IPR050076">
    <property type="entry name" value="ArchSynthase1/Queuine_TRR"/>
</dbReference>
<dbReference type="InterPro" id="IPR004803">
    <property type="entry name" value="TGT"/>
</dbReference>
<dbReference type="InterPro" id="IPR036511">
    <property type="entry name" value="TGT-like_sf"/>
</dbReference>
<dbReference type="InterPro" id="IPR002616">
    <property type="entry name" value="tRNA_ribo_trans-like"/>
</dbReference>
<dbReference type="NCBIfam" id="TIGR00430">
    <property type="entry name" value="Q_tRNA_tgt"/>
    <property type="match status" value="1"/>
</dbReference>
<dbReference type="NCBIfam" id="TIGR00449">
    <property type="entry name" value="tgt_general"/>
    <property type="match status" value="1"/>
</dbReference>
<dbReference type="PANTHER" id="PTHR46499">
    <property type="entry name" value="QUEUINE TRNA-RIBOSYLTRANSFERASE"/>
    <property type="match status" value="1"/>
</dbReference>
<dbReference type="PANTHER" id="PTHR46499:SF1">
    <property type="entry name" value="QUEUINE TRNA-RIBOSYLTRANSFERASE"/>
    <property type="match status" value="1"/>
</dbReference>
<dbReference type="Pfam" id="PF01702">
    <property type="entry name" value="TGT"/>
    <property type="match status" value="1"/>
</dbReference>
<dbReference type="SUPFAM" id="SSF51713">
    <property type="entry name" value="tRNA-guanine transglycosylase"/>
    <property type="match status" value="1"/>
</dbReference>
<protein>
    <recommendedName>
        <fullName evidence="1">Queuine tRNA-ribosyltransferase</fullName>
        <ecNumber evidence="1">2.4.2.29</ecNumber>
    </recommendedName>
    <alternativeName>
        <fullName evidence="1">Guanine insertion enzyme</fullName>
    </alternativeName>
    <alternativeName>
        <fullName evidence="1">tRNA-guanine transglycosylase</fullName>
    </alternativeName>
</protein>
<name>TGT_BACC0</name>